<reference key="1">
    <citation type="journal article" date="2001" name="Nature">
        <title>Complete genome sequence of a multiple drug resistant Salmonella enterica serovar Typhi CT18.</title>
        <authorList>
            <person name="Parkhill J."/>
            <person name="Dougan G."/>
            <person name="James K.D."/>
            <person name="Thomson N.R."/>
            <person name="Pickard D."/>
            <person name="Wain J."/>
            <person name="Churcher C.M."/>
            <person name="Mungall K.L."/>
            <person name="Bentley S.D."/>
            <person name="Holden M.T.G."/>
            <person name="Sebaihia M."/>
            <person name="Baker S."/>
            <person name="Basham D."/>
            <person name="Brooks K."/>
            <person name="Chillingworth T."/>
            <person name="Connerton P."/>
            <person name="Cronin A."/>
            <person name="Davis P."/>
            <person name="Davies R.M."/>
            <person name="Dowd L."/>
            <person name="White N."/>
            <person name="Farrar J."/>
            <person name="Feltwell T."/>
            <person name="Hamlin N."/>
            <person name="Haque A."/>
            <person name="Hien T.T."/>
            <person name="Holroyd S."/>
            <person name="Jagels K."/>
            <person name="Krogh A."/>
            <person name="Larsen T.S."/>
            <person name="Leather S."/>
            <person name="Moule S."/>
            <person name="O'Gaora P."/>
            <person name="Parry C."/>
            <person name="Quail M.A."/>
            <person name="Rutherford K.M."/>
            <person name="Simmonds M."/>
            <person name="Skelton J."/>
            <person name="Stevens K."/>
            <person name="Whitehead S."/>
            <person name="Barrell B.G."/>
        </authorList>
    </citation>
    <scope>NUCLEOTIDE SEQUENCE [LARGE SCALE GENOMIC DNA]</scope>
    <source>
        <strain>CT18</strain>
    </source>
</reference>
<reference key="2">
    <citation type="journal article" date="2003" name="J. Bacteriol.">
        <title>Comparative genomics of Salmonella enterica serovar Typhi strains Ty2 and CT18.</title>
        <authorList>
            <person name="Deng W."/>
            <person name="Liou S.-R."/>
            <person name="Plunkett G. III"/>
            <person name="Mayhew G.F."/>
            <person name="Rose D.J."/>
            <person name="Burland V."/>
            <person name="Kodoyianni V."/>
            <person name="Schwartz D.C."/>
            <person name="Blattner F.R."/>
        </authorList>
    </citation>
    <scope>NUCLEOTIDE SEQUENCE [LARGE SCALE GENOMIC DNA]</scope>
    <source>
        <strain>ATCC 700931 / Ty2</strain>
    </source>
</reference>
<name>OADG2_SALTI</name>
<sequence length="80" mass="8630">MTNAALLLGEGFTLMLLGMGFVLAFLFLLIFAIRGMSAVITRFFPEPVAAPAPRAVPAVDDFTRLKPVIAAAIHHHRLNA</sequence>
<organism>
    <name type="scientific">Salmonella typhi</name>
    <dbReference type="NCBI Taxonomy" id="90370"/>
    <lineage>
        <taxon>Bacteria</taxon>
        <taxon>Pseudomonadati</taxon>
        <taxon>Pseudomonadota</taxon>
        <taxon>Gammaproteobacteria</taxon>
        <taxon>Enterobacterales</taxon>
        <taxon>Enterobacteriaceae</taxon>
        <taxon>Salmonella</taxon>
    </lineage>
</organism>
<dbReference type="EC" id="7.2.4.2"/>
<dbReference type="EMBL" id="AL513382">
    <property type="protein sequence ID" value="CAD07868.1"/>
    <property type="molecule type" value="Genomic_DNA"/>
</dbReference>
<dbReference type="EMBL" id="AE014613">
    <property type="protein sequence ID" value="AAO70803.1"/>
    <property type="molecule type" value="Genomic_DNA"/>
</dbReference>
<dbReference type="RefSeq" id="NP_457729.1">
    <property type="nucleotide sequence ID" value="NC_003198.1"/>
</dbReference>
<dbReference type="RefSeq" id="WP_000180130.1">
    <property type="nucleotide sequence ID" value="NZ_QGFP01000081.1"/>
</dbReference>
<dbReference type="SMR" id="Q8Z3E4"/>
<dbReference type="STRING" id="220341.gene:17587381"/>
<dbReference type="KEGG" id="stt:t3268"/>
<dbReference type="KEGG" id="sty:STY3533"/>
<dbReference type="PATRIC" id="fig|220341.7.peg.3597"/>
<dbReference type="eggNOG" id="COG3630">
    <property type="taxonomic scope" value="Bacteria"/>
</dbReference>
<dbReference type="HOGENOM" id="CLU_168750_3_2_6"/>
<dbReference type="OMA" id="FRITMSQ"/>
<dbReference type="Proteomes" id="UP000000541">
    <property type="component" value="Chromosome"/>
</dbReference>
<dbReference type="Proteomes" id="UP000002670">
    <property type="component" value="Chromosome"/>
</dbReference>
<dbReference type="GO" id="GO:0005886">
    <property type="term" value="C:plasma membrane"/>
    <property type="evidence" value="ECO:0007669"/>
    <property type="project" value="UniProtKB-SubCell"/>
</dbReference>
<dbReference type="GO" id="GO:0015451">
    <property type="term" value="F:decarboxylation-driven active transmembrane transporter activity"/>
    <property type="evidence" value="ECO:0007669"/>
    <property type="project" value="UniProtKB-EC"/>
</dbReference>
<dbReference type="GO" id="GO:0008948">
    <property type="term" value="F:oxaloacetate decarboxylase activity"/>
    <property type="evidence" value="ECO:0007669"/>
    <property type="project" value="UniProtKB-UniRule"/>
</dbReference>
<dbReference type="GO" id="GO:0015081">
    <property type="term" value="F:sodium ion transmembrane transporter activity"/>
    <property type="evidence" value="ECO:0007669"/>
    <property type="project" value="UniProtKB-UniRule"/>
</dbReference>
<dbReference type="GO" id="GO:0036376">
    <property type="term" value="P:sodium ion export across plasma membrane"/>
    <property type="evidence" value="ECO:0007669"/>
    <property type="project" value="InterPro"/>
</dbReference>
<dbReference type="HAMAP" id="MF_00404">
    <property type="entry name" value="OadG"/>
    <property type="match status" value="1"/>
</dbReference>
<dbReference type="InterPro" id="IPR005899">
    <property type="entry name" value="Na_pump_deCOase"/>
</dbReference>
<dbReference type="InterPro" id="IPR023424">
    <property type="entry name" value="OadG"/>
</dbReference>
<dbReference type="NCBIfam" id="TIGR01195">
    <property type="entry name" value="oadG_fam"/>
    <property type="match status" value="1"/>
</dbReference>
<dbReference type="NCBIfam" id="NF002792">
    <property type="entry name" value="PRK02919.1"/>
    <property type="match status" value="1"/>
</dbReference>
<dbReference type="Pfam" id="PF04277">
    <property type="entry name" value="OAD_gamma"/>
    <property type="match status" value="1"/>
</dbReference>
<comment type="function">
    <text evidence="1">Catalyzes the decarboxylation of oxaloacetate coupled to Na(+) translocation.</text>
</comment>
<comment type="catalytic activity">
    <reaction>
        <text>oxaloacetate + 2 Na(+)(in) + H(+) = pyruvate + 2 Na(+)(out) + CO2</text>
        <dbReference type="Rhea" id="RHEA:57724"/>
        <dbReference type="ChEBI" id="CHEBI:15361"/>
        <dbReference type="ChEBI" id="CHEBI:15378"/>
        <dbReference type="ChEBI" id="CHEBI:16452"/>
        <dbReference type="ChEBI" id="CHEBI:16526"/>
        <dbReference type="ChEBI" id="CHEBI:29101"/>
        <dbReference type="EC" id="7.2.4.2"/>
    </reaction>
</comment>
<comment type="cofactor">
    <cofactor evidence="1">
        <name>Na(+)</name>
        <dbReference type="ChEBI" id="CHEBI:29101"/>
    </cofactor>
</comment>
<comment type="subunit">
    <text evidence="1">Heterotrimer of an alpha, a beta and a gamma subunit.</text>
</comment>
<comment type="subcellular location">
    <subcellularLocation>
        <location evidence="1">Cell membrane</location>
        <topology evidence="1">Single-pass membrane protein</topology>
    </subcellularLocation>
</comment>
<comment type="similarity">
    <text evidence="3">Belongs to the OadG family.</text>
</comment>
<keyword id="KW-1003">Cell membrane</keyword>
<keyword id="KW-0406">Ion transport</keyword>
<keyword id="KW-0472">Membrane</keyword>
<keyword id="KW-0915">Sodium</keyword>
<keyword id="KW-0739">Sodium transport</keyword>
<keyword id="KW-1278">Translocase</keyword>
<keyword id="KW-0812">Transmembrane</keyword>
<keyword id="KW-1133">Transmembrane helix</keyword>
<keyword id="KW-0813">Transport</keyword>
<feature type="chain" id="PRO_0000216456" description="Oxaloacetate decarboxylase gamma chain 2">
    <location>
        <begin position="1"/>
        <end position="80"/>
    </location>
</feature>
<feature type="transmembrane region" description="Helical" evidence="2">
    <location>
        <begin position="13"/>
        <end position="33"/>
    </location>
</feature>
<gene>
    <name type="primary">oadG2</name>
    <name type="ordered locus">STY3533</name>
    <name type="ordered locus">t3268</name>
</gene>
<proteinExistence type="inferred from homology"/>
<protein>
    <recommendedName>
        <fullName>Oxaloacetate decarboxylase gamma chain 2</fullName>
        <ecNumber>7.2.4.2</ecNumber>
    </recommendedName>
</protein>
<accession>Q8Z3E4</accession>
<evidence type="ECO:0000250" key="1"/>
<evidence type="ECO:0000255" key="2"/>
<evidence type="ECO:0000305" key="3"/>